<name>CCSA_BARVE</name>
<sequence length="328" mass="37776">MIFSILEHILTHISFSVVSIVLTIYFFTLLVNLDEIIGFFDSSDKGIVITFFGITGLLFTRWIYSGHFPLSNLYESLIFLSWAFSIIHMVSYFNKKKKNHLNAITAPSAIFIQGFATSGLLNKMPQSAILVPALQSQWLMMHVSMMILGYGALLCGSLLSIALLVITFRKVGPTFWKKNIKKKFLLNELFSFDVFYYINERNSILLQQNINFSFSRNYYRYQLIEQLDYWSFRIISLGFIFLTVGILSGAVWANETWGSYWNWDPKETWAFITWTIFAIYLHIKTNRNVRGINSAIVASIGFLLIWICYFGVNLLGIGLHSYGSFTSN</sequence>
<gene>
    <name evidence="1" type="primary">ccsA</name>
</gene>
<dbReference type="EMBL" id="AP009370">
    <property type="protein sequence ID" value="BAF50161.1"/>
    <property type="molecule type" value="Genomic_DNA"/>
</dbReference>
<dbReference type="RefSeq" id="YP_001123336.1">
    <property type="nucleotide sequence ID" value="NC_009269.1"/>
</dbReference>
<dbReference type="SMR" id="A4QKF6"/>
<dbReference type="GeneID" id="4961836"/>
<dbReference type="GO" id="GO:0009535">
    <property type="term" value="C:chloroplast thylakoid membrane"/>
    <property type="evidence" value="ECO:0007669"/>
    <property type="project" value="UniProtKB-SubCell"/>
</dbReference>
<dbReference type="GO" id="GO:0005886">
    <property type="term" value="C:plasma membrane"/>
    <property type="evidence" value="ECO:0007669"/>
    <property type="project" value="TreeGrafter"/>
</dbReference>
<dbReference type="GO" id="GO:0020037">
    <property type="term" value="F:heme binding"/>
    <property type="evidence" value="ECO:0007669"/>
    <property type="project" value="InterPro"/>
</dbReference>
<dbReference type="GO" id="GO:0017004">
    <property type="term" value="P:cytochrome complex assembly"/>
    <property type="evidence" value="ECO:0007669"/>
    <property type="project" value="UniProtKB-UniRule"/>
</dbReference>
<dbReference type="HAMAP" id="MF_01391">
    <property type="entry name" value="CytC_CcsA"/>
    <property type="match status" value="1"/>
</dbReference>
<dbReference type="InterPro" id="IPR002541">
    <property type="entry name" value="Cyt_c_assembly"/>
</dbReference>
<dbReference type="InterPro" id="IPR017562">
    <property type="entry name" value="Cyt_c_biogenesis_CcsA"/>
</dbReference>
<dbReference type="InterPro" id="IPR045062">
    <property type="entry name" value="Cyt_c_biogenesis_CcsA/CcmC"/>
</dbReference>
<dbReference type="NCBIfam" id="TIGR03144">
    <property type="entry name" value="cytochr_II_ccsB"/>
    <property type="match status" value="1"/>
</dbReference>
<dbReference type="PANTHER" id="PTHR30071:SF1">
    <property type="entry name" value="CYTOCHROME B_B6 PROTEIN-RELATED"/>
    <property type="match status" value="1"/>
</dbReference>
<dbReference type="PANTHER" id="PTHR30071">
    <property type="entry name" value="HEME EXPORTER PROTEIN C"/>
    <property type="match status" value="1"/>
</dbReference>
<dbReference type="Pfam" id="PF01578">
    <property type="entry name" value="Cytochrom_C_asm"/>
    <property type="match status" value="1"/>
</dbReference>
<reference key="1">
    <citation type="submission" date="2007-03" db="EMBL/GenBank/DDBJ databases">
        <title>Sequencing analysis of Barbarea verna chloroplast DNA.</title>
        <authorList>
            <person name="Hosouchi T."/>
            <person name="Tsuruoka H."/>
            <person name="Kotani H."/>
        </authorList>
    </citation>
    <scope>NUCLEOTIDE SEQUENCE [LARGE SCALE GENOMIC DNA]</scope>
</reference>
<accession>A4QKF6</accession>
<geneLocation type="chloroplast"/>
<feature type="chain" id="PRO_0000353733" description="Cytochrome c biogenesis protein CcsA">
    <location>
        <begin position="1"/>
        <end position="328"/>
    </location>
</feature>
<feature type="transmembrane region" description="Helical" evidence="1">
    <location>
        <begin position="13"/>
        <end position="33"/>
    </location>
</feature>
<feature type="transmembrane region" description="Helical" evidence="1">
    <location>
        <begin position="46"/>
        <end position="66"/>
    </location>
</feature>
<feature type="transmembrane region" description="Helical" evidence="1">
    <location>
        <begin position="73"/>
        <end position="93"/>
    </location>
</feature>
<feature type="transmembrane region" description="Helical" evidence="1">
    <location>
        <begin position="101"/>
        <end position="121"/>
    </location>
</feature>
<feature type="transmembrane region" description="Helical" evidence="1">
    <location>
        <begin position="146"/>
        <end position="166"/>
    </location>
</feature>
<feature type="transmembrane region" description="Helical" evidence="1">
    <location>
        <begin position="234"/>
        <end position="254"/>
    </location>
</feature>
<feature type="transmembrane region" description="Helical" evidence="1">
    <location>
        <begin position="263"/>
        <end position="283"/>
    </location>
</feature>
<feature type="transmembrane region" description="Helical" evidence="1">
    <location>
        <begin position="295"/>
        <end position="315"/>
    </location>
</feature>
<organism>
    <name type="scientific">Barbarea verna</name>
    <name type="common">Land cress</name>
    <name type="synonym">Erysimum vernum</name>
    <dbReference type="NCBI Taxonomy" id="50458"/>
    <lineage>
        <taxon>Eukaryota</taxon>
        <taxon>Viridiplantae</taxon>
        <taxon>Streptophyta</taxon>
        <taxon>Embryophyta</taxon>
        <taxon>Tracheophyta</taxon>
        <taxon>Spermatophyta</taxon>
        <taxon>Magnoliopsida</taxon>
        <taxon>eudicotyledons</taxon>
        <taxon>Gunneridae</taxon>
        <taxon>Pentapetalae</taxon>
        <taxon>rosids</taxon>
        <taxon>malvids</taxon>
        <taxon>Brassicales</taxon>
        <taxon>Brassicaceae</taxon>
        <taxon>Cardamineae</taxon>
        <taxon>Barbarea</taxon>
    </lineage>
</organism>
<evidence type="ECO:0000255" key="1">
    <source>
        <dbReference type="HAMAP-Rule" id="MF_01391"/>
    </source>
</evidence>
<comment type="function">
    <text evidence="1">Required during biogenesis of c-type cytochromes (cytochrome c6 and cytochrome f) at the step of heme attachment.</text>
</comment>
<comment type="subunit">
    <text evidence="1">May interact with Ccs1.</text>
</comment>
<comment type="subcellular location">
    <subcellularLocation>
        <location evidence="1">Plastid</location>
        <location evidence="1">Chloroplast thylakoid membrane</location>
        <topology evidence="1">Multi-pass membrane protein</topology>
    </subcellularLocation>
</comment>
<comment type="similarity">
    <text evidence="1">Belongs to the CcmF/CycK/Ccl1/NrfE/CcsA family.</text>
</comment>
<keyword id="KW-0150">Chloroplast</keyword>
<keyword id="KW-0201">Cytochrome c-type biogenesis</keyword>
<keyword id="KW-0472">Membrane</keyword>
<keyword id="KW-0934">Plastid</keyword>
<keyword id="KW-0793">Thylakoid</keyword>
<keyword id="KW-0812">Transmembrane</keyword>
<keyword id="KW-1133">Transmembrane helix</keyword>
<protein>
    <recommendedName>
        <fullName evidence="1">Cytochrome c biogenesis protein CcsA</fullName>
    </recommendedName>
</protein>
<proteinExistence type="inferred from homology"/>